<reference key="1">
    <citation type="journal article" date="2007" name="J. Bacteriol.">
        <title>The complete genome sequence of Campylobacter jejuni strain 81116 (NCTC11828).</title>
        <authorList>
            <person name="Pearson B.M."/>
            <person name="Gaskin D.J.H."/>
            <person name="Segers R.P.A.M."/>
            <person name="Wells J.M."/>
            <person name="Nuijten P.J.M."/>
            <person name="van Vliet A.H.M."/>
        </authorList>
    </citation>
    <scope>NUCLEOTIDE SEQUENCE [LARGE SCALE GENOMIC DNA]</scope>
    <source>
        <strain>81116 / NCTC 11828</strain>
    </source>
</reference>
<accession>A8FMX9</accession>
<organism>
    <name type="scientific">Campylobacter jejuni subsp. jejuni serotype O:6 (strain 81116 / NCTC 11828)</name>
    <dbReference type="NCBI Taxonomy" id="407148"/>
    <lineage>
        <taxon>Bacteria</taxon>
        <taxon>Pseudomonadati</taxon>
        <taxon>Campylobacterota</taxon>
        <taxon>Epsilonproteobacteria</taxon>
        <taxon>Campylobacterales</taxon>
        <taxon>Campylobacteraceae</taxon>
        <taxon>Campylobacter</taxon>
    </lineage>
</organism>
<comment type="function">
    <text evidence="1">Promotes RNA polymerase assembly. Latches the N- and C-terminal regions of the beta' subunit thereby facilitating its interaction with the beta and alpha subunits.</text>
</comment>
<comment type="catalytic activity">
    <reaction evidence="1">
        <text>RNA(n) + a ribonucleoside 5'-triphosphate = RNA(n+1) + diphosphate</text>
        <dbReference type="Rhea" id="RHEA:21248"/>
        <dbReference type="Rhea" id="RHEA-COMP:14527"/>
        <dbReference type="Rhea" id="RHEA-COMP:17342"/>
        <dbReference type="ChEBI" id="CHEBI:33019"/>
        <dbReference type="ChEBI" id="CHEBI:61557"/>
        <dbReference type="ChEBI" id="CHEBI:140395"/>
        <dbReference type="EC" id="2.7.7.6"/>
    </reaction>
</comment>
<comment type="subunit">
    <text evidence="1">The RNAP catalytic core consists of 2 alpha, 1 beta, 1 beta' and 1 omega subunit. When a sigma factor is associated with the core the holoenzyme is formed, which can initiate transcription.</text>
</comment>
<comment type="similarity">
    <text evidence="1">Belongs to the RNA polymerase subunit omega family.</text>
</comment>
<gene>
    <name evidence="1" type="primary">rpoZ</name>
    <name type="ordered locus">C8J_1217</name>
</gene>
<sequence>MDKRIEEVAAKALEKMGNDRYRLSLVVAKRAEQLANGATPLVDFDKNKNKLADIALYEIAENKITLEGLVETNR</sequence>
<feature type="chain" id="PRO_1000072104" description="DNA-directed RNA polymerase subunit omega">
    <location>
        <begin position="1"/>
        <end position="74"/>
    </location>
</feature>
<name>RPOZ_CAMJ8</name>
<protein>
    <recommendedName>
        <fullName evidence="1">DNA-directed RNA polymerase subunit omega</fullName>
        <shortName evidence="1">RNAP omega subunit</shortName>
        <ecNumber evidence="1">2.7.7.6</ecNumber>
    </recommendedName>
    <alternativeName>
        <fullName evidence="1">RNA polymerase omega subunit</fullName>
    </alternativeName>
    <alternativeName>
        <fullName evidence="1">Transcriptase subunit omega</fullName>
    </alternativeName>
</protein>
<evidence type="ECO:0000255" key="1">
    <source>
        <dbReference type="HAMAP-Rule" id="MF_00366"/>
    </source>
</evidence>
<proteinExistence type="inferred from homology"/>
<dbReference type="EC" id="2.7.7.6" evidence="1"/>
<dbReference type="EMBL" id="CP000814">
    <property type="protein sequence ID" value="ABV52816.1"/>
    <property type="molecule type" value="Genomic_DNA"/>
</dbReference>
<dbReference type="RefSeq" id="WP_002853464.1">
    <property type="nucleotide sequence ID" value="NC_009839.1"/>
</dbReference>
<dbReference type="SMR" id="A8FMX9"/>
<dbReference type="KEGG" id="cju:C8J_1217"/>
<dbReference type="HOGENOM" id="CLU_125406_3_0_7"/>
<dbReference type="GO" id="GO:0000428">
    <property type="term" value="C:DNA-directed RNA polymerase complex"/>
    <property type="evidence" value="ECO:0007669"/>
    <property type="project" value="UniProtKB-KW"/>
</dbReference>
<dbReference type="GO" id="GO:0003677">
    <property type="term" value="F:DNA binding"/>
    <property type="evidence" value="ECO:0007669"/>
    <property type="project" value="UniProtKB-UniRule"/>
</dbReference>
<dbReference type="GO" id="GO:0003899">
    <property type="term" value="F:DNA-directed RNA polymerase activity"/>
    <property type="evidence" value="ECO:0007669"/>
    <property type="project" value="UniProtKB-UniRule"/>
</dbReference>
<dbReference type="GO" id="GO:0006351">
    <property type="term" value="P:DNA-templated transcription"/>
    <property type="evidence" value="ECO:0007669"/>
    <property type="project" value="UniProtKB-UniRule"/>
</dbReference>
<dbReference type="Gene3D" id="3.90.940.10">
    <property type="match status" value="1"/>
</dbReference>
<dbReference type="HAMAP" id="MF_00366">
    <property type="entry name" value="RNApol_bact_RpoZ"/>
    <property type="match status" value="1"/>
</dbReference>
<dbReference type="InterPro" id="IPR003716">
    <property type="entry name" value="DNA-dir_RNA_pol_omega"/>
</dbReference>
<dbReference type="InterPro" id="IPR006110">
    <property type="entry name" value="Pol_omega/Rpo6/RPB6"/>
</dbReference>
<dbReference type="InterPro" id="IPR036161">
    <property type="entry name" value="RPB6/omega-like_sf"/>
</dbReference>
<dbReference type="NCBIfam" id="NF001579">
    <property type="entry name" value="PRK00392.6-2"/>
    <property type="match status" value="1"/>
</dbReference>
<dbReference type="NCBIfam" id="TIGR00690">
    <property type="entry name" value="rpoZ"/>
    <property type="match status" value="1"/>
</dbReference>
<dbReference type="Pfam" id="PF01192">
    <property type="entry name" value="RNA_pol_Rpb6"/>
    <property type="match status" value="1"/>
</dbReference>
<dbReference type="SMART" id="SM01409">
    <property type="entry name" value="RNA_pol_Rpb6"/>
    <property type="match status" value="1"/>
</dbReference>
<dbReference type="SUPFAM" id="SSF63562">
    <property type="entry name" value="RPB6/omega subunit-like"/>
    <property type="match status" value="1"/>
</dbReference>
<keyword id="KW-0240">DNA-directed RNA polymerase</keyword>
<keyword id="KW-0548">Nucleotidyltransferase</keyword>
<keyword id="KW-0804">Transcription</keyword>
<keyword id="KW-0808">Transferase</keyword>